<comment type="function">
    <text evidence="1">Catalyzes the dehydration of methylthioribulose-1-phosphate (MTRu-1-P) into 2,3-diketo-5-methylthiopentyl-1-phosphate (DK-MTP-1-P).</text>
</comment>
<comment type="catalytic activity">
    <reaction evidence="1">
        <text>5-(methylsulfanyl)-D-ribulose 1-phosphate = 5-methylsulfanyl-2,3-dioxopentyl phosphate + H2O</text>
        <dbReference type="Rhea" id="RHEA:15549"/>
        <dbReference type="ChEBI" id="CHEBI:15377"/>
        <dbReference type="ChEBI" id="CHEBI:58548"/>
        <dbReference type="ChEBI" id="CHEBI:58828"/>
        <dbReference type="EC" id="4.2.1.109"/>
    </reaction>
</comment>
<comment type="cofactor">
    <cofactor evidence="1">
        <name>Zn(2+)</name>
        <dbReference type="ChEBI" id="CHEBI:29105"/>
    </cofactor>
    <text evidence="1">Binds 1 zinc ion per subunit.</text>
</comment>
<comment type="pathway">
    <text evidence="1">Amino-acid biosynthesis; L-methionine biosynthesis via salvage pathway; L-methionine from S-methyl-5-thio-alpha-D-ribose 1-phosphate: step 2/6.</text>
</comment>
<comment type="subcellular location">
    <subcellularLocation>
        <location evidence="1">Cytoplasm</location>
    </subcellularLocation>
</comment>
<comment type="similarity">
    <text evidence="1">Belongs to the aldolase class II family. MtnB subfamily.</text>
</comment>
<feature type="chain" id="PRO_0000393838" description="Methylthioribulose-1-phosphate dehydratase">
    <location>
        <begin position="1"/>
        <end position="254"/>
    </location>
</feature>
<feature type="active site" description="Proton donor/acceptor" evidence="1">
    <location>
        <position position="156"/>
    </location>
</feature>
<feature type="binding site" evidence="1">
    <location>
        <position position="110"/>
    </location>
    <ligand>
        <name>substrate</name>
    </ligand>
</feature>
<feature type="binding site" evidence="1">
    <location>
        <position position="127"/>
    </location>
    <ligand>
        <name>Zn(2+)</name>
        <dbReference type="ChEBI" id="CHEBI:29105"/>
    </ligand>
</feature>
<feature type="binding site" evidence="1">
    <location>
        <position position="129"/>
    </location>
    <ligand>
        <name>Zn(2+)</name>
        <dbReference type="ChEBI" id="CHEBI:29105"/>
    </ligand>
</feature>
<feature type="binding site" evidence="1">
    <location>
        <position position="212"/>
    </location>
    <ligand>
        <name>Zn(2+)</name>
        <dbReference type="ChEBI" id="CHEBI:29105"/>
    </ligand>
</feature>
<sequence>MAEATNQVAVANGHENEDNNDHLIQSSDPQHPANLIPEMCRKFYTWGWVTGTGGGTSIRHGDHIFIAPSGVQKELIQPENMFVMQFPTPKYPPSERKYIRKPKNLKPSDCTPLFLTAFERGAGCCIHTHSQWAVLVTLLVEREYGKEGYFEISNIEQIKGIPKGKGKGMHNYHDTLRIPIIENTPFEEDLTEGLERAINANPDTYAVLVRRHGIYVWGDTPAKAKTQCESLDWLFQLAVEMHKLGLPWDINKTK</sequence>
<keyword id="KW-0028">Amino-acid biosynthesis</keyword>
<keyword id="KW-0963">Cytoplasm</keyword>
<keyword id="KW-0456">Lyase</keyword>
<keyword id="KW-0479">Metal-binding</keyword>
<keyword id="KW-0486">Methionine biosynthesis</keyword>
<keyword id="KW-1185">Reference proteome</keyword>
<keyword id="KW-0862">Zinc</keyword>
<dbReference type="EC" id="4.2.1.109" evidence="1"/>
<dbReference type="EMBL" id="DS995904">
    <property type="protein sequence ID" value="EEA20135.1"/>
    <property type="molecule type" value="Genomic_DNA"/>
</dbReference>
<dbReference type="RefSeq" id="XP_002151135.1">
    <property type="nucleotide sequence ID" value="XM_002151099.1"/>
</dbReference>
<dbReference type="SMR" id="B6QQ13"/>
<dbReference type="STRING" id="441960.B6QQ13"/>
<dbReference type="VEuPathDB" id="FungiDB:PMAA_039960"/>
<dbReference type="HOGENOM" id="CLU_006033_4_0_1"/>
<dbReference type="OrthoDB" id="2263at28568"/>
<dbReference type="PhylomeDB" id="B6QQ13"/>
<dbReference type="UniPathway" id="UPA00904">
    <property type="reaction ID" value="UER00875"/>
</dbReference>
<dbReference type="Proteomes" id="UP000001294">
    <property type="component" value="Unassembled WGS sequence"/>
</dbReference>
<dbReference type="GO" id="GO:0005737">
    <property type="term" value="C:cytoplasm"/>
    <property type="evidence" value="ECO:0007669"/>
    <property type="project" value="UniProtKB-SubCell"/>
</dbReference>
<dbReference type="GO" id="GO:0046570">
    <property type="term" value="F:methylthioribulose 1-phosphate dehydratase activity"/>
    <property type="evidence" value="ECO:0007669"/>
    <property type="project" value="UniProtKB-UniRule"/>
</dbReference>
<dbReference type="GO" id="GO:0008270">
    <property type="term" value="F:zinc ion binding"/>
    <property type="evidence" value="ECO:0007669"/>
    <property type="project" value="UniProtKB-UniRule"/>
</dbReference>
<dbReference type="GO" id="GO:0019509">
    <property type="term" value="P:L-methionine salvage from methylthioadenosine"/>
    <property type="evidence" value="ECO:0007669"/>
    <property type="project" value="UniProtKB-UniRule"/>
</dbReference>
<dbReference type="FunFam" id="3.40.225.10:FF:000003">
    <property type="entry name" value="Methylthioribulose-1-phosphate dehydratase"/>
    <property type="match status" value="1"/>
</dbReference>
<dbReference type="Gene3D" id="3.40.225.10">
    <property type="entry name" value="Class II aldolase/adducin N-terminal domain"/>
    <property type="match status" value="1"/>
</dbReference>
<dbReference type="HAMAP" id="MF_03116">
    <property type="entry name" value="Salvage_MtnB_euk"/>
    <property type="match status" value="1"/>
</dbReference>
<dbReference type="InterPro" id="IPR001303">
    <property type="entry name" value="Aldolase_II/adducin_N"/>
</dbReference>
<dbReference type="InterPro" id="IPR036409">
    <property type="entry name" value="Aldolase_II/adducin_N_sf"/>
</dbReference>
<dbReference type="InterPro" id="IPR017714">
    <property type="entry name" value="MethylthioRu-1-P_deHdtase_MtnB"/>
</dbReference>
<dbReference type="InterPro" id="IPR027514">
    <property type="entry name" value="Salvage_MtnB_euk"/>
</dbReference>
<dbReference type="NCBIfam" id="TIGR03328">
    <property type="entry name" value="salvage_mtnB"/>
    <property type="match status" value="1"/>
</dbReference>
<dbReference type="PANTHER" id="PTHR10640">
    <property type="entry name" value="METHYLTHIORIBULOSE-1-PHOSPHATE DEHYDRATASE"/>
    <property type="match status" value="1"/>
</dbReference>
<dbReference type="PANTHER" id="PTHR10640:SF7">
    <property type="entry name" value="METHYLTHIORIBULOSE-1-PHOSPHATE DEHYDRATASE"/>
    <property type="match status" value="1"/>
</dbReference>
<dbReference type="Pfam" id="PF00596">
    <property type="entry name" value="Aldolase_II"/>
    <property type="match status" value="1"/>
</dbReference>
<dbReference type="SMART" id="SM01007">
    <property type="entry name" value="Aldolase_II"/>
    <property type="match status" value="1"/>
</dbReference>
<dbReference type="SUPFAM" id="SSF53639">
    <property type="entry name" value="AraD/HMP-PK domain-like"/>
    <property type="match status" value="1"/>
</dbReference>
<gene>
    <name evidence="1" type="primary">mde1</name>
    <name type="ORF">PMAA_039960</name>
</gene>
<reference key="1">
    <citation type="journal article" date="2015" name="Genome Announc.">
        <title>Genome sequence of the AIDS-associated pathogen Penicillium marneffei (ATCC18224) and its near taxonomic relative Talaromyces stipitatus (ATCC10500).</title>
        <authorList>
            <person name="Nierman W.C."/>
            <person name="Fedorova-Abrams N.D."/>
            <person name="Andrianopoulos A."/>
        </authorList>
    </citation>
    <scope>NUCLEOTIDE SEQUENCE [LARGE SCALE GENOMIC DNA]</scope>
    <source>
        <strain>ATCC 18224 / CBS 334.59 / QM 7333</strain>
    </source>
</reference>
<proteinExistence type="inferred from homology"/>
<evidence type="ECO:0000255" key="1">
    <source>
        <dbReference type="HAMAP-Rule" id="MF_03116"/>
    </source>
</evidence>
<protein>
    <recommendedName>
        <fullName evidence="1">Methylthioribulose-1-phosphate dehydratase</fullName>
        <shortName evidence="1">MTRu-1-P dehydratase</shortName>
        <ecNumber evidence="1">4.2.1.109</ecNumber>
    </recommendedName>
</protein>
<organism>
    <name type="scientific">Talaromyces marneffei (strain ATCC 18224 / CBS 334.59 / QM 7333)</name>
    <name type="common">Penicillium marneffei</name>
    <dbReference type="NCBI Taxonomy" id="441960"/>
    <lineage>
        <taxon>Eukaryota</taxon>
        <taxon>Fungi</taxon>
        <taxon>Dikarya</taxon>
        <taxon>Ascomycota</taxon>
        <taxon>Pezizomycotina</taxon>
        <taxon>Eurotiomycetes</taxon>
        <taxon>Eurotiomycetidae</taxon>
        <taxon>Eurotiales</taxon>
        <taxon>Trichocomaceae</taxon>
        <taxon>Talaromyces</taxon>
        <taxon>Talaromyces sect. Talaromyces</taxon>
    </lineage>
</organism>
<accession>B6QQ13</accession>
<name>MTNB_TALMQ</name>